<dbReference type="EC" id="2.7.2.11"/>
<dbReference type="EMBL" id="CU329670">
    <property type="protein sequence ID" value="CAB11222.1"/>
    <property type="molecule type" value="Genomic_DNA"/>
</dbReference>
<dbReference type="PIR" id="T37879">
    <property type="entry name" value="T37879"/>
</dbReference>
<dbReference type="SMR" id="O13810"/>
<dbReference type="BioGRID" id="278742">
    <property type="interactions" value="144"/>
</dbReference>
<dbReference type="FunCoup" id="O13810">
    <property type="interactions" value="371"/>
</dbReference>
<dbReference type="STRING" id="284812.O13810"/>
<dbReference type="iPTMnet" id="O13810"/>
<dbReference type="PaxDb" id="4896-SPAC17H9.13c.1"/>
<dbReference type="EnsemblFungi" id="SPAC17H9.13c.1">
    <property type="protein sequence ID" value="SPAC17H9.13c.1:pep"/>
    <property type="gene ID" value="SPAC17H9.13c"/>
</dbReference>
<dbReference type="KEGG" id="spo:2542273"/>
<dbReference type="PomBase" id="SPAC17H9.13c"/>
<dbReference type="VEuPathDB" id="FungiDB:SPAC17H9.13c"/>
<dbReference type="eggNOG" id="KOG1154">
    <property type="taxonomic scope" value="Eukaryota"/>
</dbReference>
<dbReference type="HOGENOM" id="CLU_025400_1_1_1"/>
<dbReference type="InParanoid" id="O13810"/>
<dbReference type="OMA" id="NLAFPPH"/>
<dbReference type="PhylomeDB" id="O13810"/>
<dbReference type="UniPathway" id="UPA00098">
    <property type="reaction ID" value="UER00359"/>
</dbReference>
<dbReference type="PRO" id="PR:O13810"/>
<dbReference type="Proteomes" id="UP000002485">
    <property type="component" value="Chromosome I"/>
</dbReference>
<dbReference type="GO" id="GO:0005829">
    <property type="term" value="C:cytosol"/>
    <property type="evidence" value="ECO:0000318"/>
    <property type="project" value="GO_Central"/>
</dbReference>
<dbReference type="GO" id="GO:0005524">
    <property type="term" value="F:ATP binding"/>
    <property type="evidence" value="ECO:0007669"/>
    <property type="project" value="UniProtKB-KW"/>
</dbReference>
<dbReference type="GO" id="GO:0004349">
    <property type="term" value="F:glutamate 5-kinase activity"/>
    <property type="evidence" value="ECO:0000318"/>
    <property type="project" value="GO_Central"/>
</dbReference>
<dbReference type="GO" id="GO:0003723">
    <property type="term" value="F:RNA binding"/>
    <property type="evidence" value="ECO:0007669"/>
    <property type="project" value="InterPro"/>
</dbReference>
<dbReference type="GO" id="GO:0006536">
    <property type="term" value="P:glutamate metabolic process"/>
    <property type="evidence" value="ECO:0000303"/>
    <property type="project" value="PomBase"/>
</dbReference>
<dbReference type="GO" id="GO:0055129">
    <property type="term" value="P:L-proline biosynthetic process"/>
    <property type="evidence" value="ECO:0000269"/>
    <property type="project" value="PomBase"/>
</dbReference>
<dbReference type="GO" id="GO:0006561">
    <property type="term" value="P:proline biosynthetic process"/>
    <property type="evidence" value="ECO:0000318"/>
    <property type="project" value="GO_Central"/>
</dbReference>
<dbReference type="CDD" id="cd04242">
    <property type="entry name" value="AAK_G5K_ProB"/>
    <property type="match status" value="1"/>
</dbReference>
<dbReference type="CDD" id="cd21157">
    <property type="entry name" value="PUA_G5K"/>
    <property type="match status" value="1"/>
</dbReference>
<dbReference type="FunFam" id="2.30.130.10:FF:000007">
    <property type="entry name" value="Glutamate 5-kinase"/>
    <property type="match status" value="1"/>
</dbReference>
<dbReference type="FunFam" id="3.40.1160.10:FF:000018">
    <property type="entry name" value="Glutamate 5-kinase"/>
    <property type="match status" value="1"/>
</dbReference>
<dbReference type="Gene3D" id="3.40.1160.10">
    <property type="entry name" value="Acetylglutamate kinase-like"/>
    <property type="match status" value="1"/>
</dbReference>
<dbReference type="Gene3D" id="2.30.130.10">
    <property type="entry name" value="PUA domain"/>
    <property type="match status" value="1"/>
</dbReference>
<dbReference type="HAMAP" id="MF_00456">
    <property type="entry name" value="ProB"/>
    <property type="match status" value="1"/>
</dbReference>
<dbReference type="InterPro" id="IPR036393">
    <property type="entry name" value="AceGlu_kinase-like_sf"/>
</dbReference>
<dbReference type="InterPro" id="IPR001048">
    <property type="entry name" value="Asp/Glu/Uridylate_kinase"/>
</dbReference>
<dbReference type="InterPro" id="IPR041739">
    <property type="entry name" value="G5K_ProB"/>
</dbReference>
<dbReference type="InterPro" id="IPR001057">
    <property type="entry name" value="Glu/AcGlu_kinase"/>
</dbReference>
<dbReference type="InterPro" id="IPR011529">
    <property type="entry name" value="Glu_5kinase"/>
</dbReference>
<dbReference type="InterPro" id="IPR005715">
    <property type="entry name" value="Glu_5kinase/COase_Synthase"/>
</dbReference>
<dbReference type="InterPro" id="IPR019797">
    <property type="entry name" value="Glutamate_5-kinase_CS"/>
</dbReference>
<dbReference type="InterPro" id="IPR002478">
    <property type="entry name" value="PUA"/>
</dbReference>
<dbReference type="InterPro" id="IPR015947">
    <property type="entry name" value="PUA-like_sf"/>
</dbReference>
<dbReference type="InterPro" id="IPR036974">
    <property type="entry name" value="PUA_sf"/>
</dbReference>
<dbReference type="NCBIfam" id="TIGR01027">
    <property type="entry name" value="proB"/>
    <property type="match status" value="1"/>
</dbReference>
<dbReference type="PANTHER" id="PTHR43654">
    <property type="entry name" value="GLUTAMATE 5-KINASE"/>
    <property type="match status" value="1"/>
</dbReference>
<dbReference type="PANTHER" id="PTHR43654:SF3">
    <property type="entry name" value="GLUTAMATE 5-KINASE"/>
    <property type="match status" value="1"/>
</dbReference>
<dbReference type="Pfam" id="PF00696">
    <property type="entry name" value="AA_kinase"/>
    <property type="match status" value="1"/>
</dbReference>
<dbReference type="Pfam" id="PF01472">
    <property type="entry name" value="PUA"/>
    <property type="match status" value="1"/>
</dbReference>
<dbReference type="PIRSF" id="PIRSF000729">
    <property type="entry name" value="GK"/>
    <property type="match status" value="1"/>
</dbReference>
<dbReference type="PRINTS" id="PR00474">
    <property type="entry name" value="GLU5KINASE"/>
</dbReference>
<dbReference type="SMART" id="SM00359">
    <property type="entry name" value="PUA"/>
    <property type="match status" value="1"/>
</dbReference>
<dbReference type="SUPFAM" id="SSF53633">
    <property type="entry name" value="Carbamate kinase-like"/>
    <property type="match status" value="1"/>
</dbReference>
<dbReference type="SUPFAM" id="SSF88697">
    <property type="entry name" value="PUA domain-like"/>
    <property type="match status" value="1"/>
</dbReference>
<dbReference type="PROSITE" id="PS00902">
    <property type="entry name" value="GLUTAMATE_5_KINASE"/>
    <property type="match status" value="1"/>
</dbReference>
<dbReference type="PROSITE" id="PS50890">
    <property type="entry name" value="PUA"/>
    <property type="match status" value="1"/>
</dbReference>
<comment type="function">
    <text>Catalyzes the transfer of a phosphate group to glutamate to form glutamate 5-phosphate which rapidly cyclizes to 5-oxoproline.</text>
</comment>
<comment type="catalytic activity">
    <reaction>
        <text>L-glutamate + ATP = L-glutamyl 5-phosphate + ADP</text>
        <dbReference type="Rhea" id="RHEA:14877"/>
        <dbReference type="ChEBI" id="CHEBI:29985"/>
        <dbReference type="ChEBI" id="CHEBI:30616"/>
        <dbReference type="ChEBI" id="CHEBI:58274"/>
        <dbReference type="ChEBI" id="CHEBI:456216"/>
        <dbReference type="EC" id="2.7.2.11"/>
    </reaction>
</comment>
<comment type="pathway">
    <text>Amino-acid biosynthesis; L-proline biosynthesis; L-glutamate 5-semialdehyde from L-glutamate: step 1/2.</text>
</comment>
<comment type="subcellular location">
    <subcellularLocation>
        <location evidence="1">Cytoplasm</location>
    </subcellularLocation>
</comment>
<comment type="similarity">
    <text evidence="2">Belongs to the glutamate 5-kinase family.</text>
</comment>
<feature type="chain" id="PRO_0000109767" description="Probable glutamate 5-kinase">
    <location>
        <begin position="1"/>
        <end position="402"/>
    </location>
</feature>
<feature type="domain" description="PUA">
    <location>
        <begin position="295"/>
        <end position="373"/>
    </location>
</feature>
<feature type="binding site" evidence="1">
    <location>
        <position position="58"/>
    </location>
    <ligand>
        <name>substrate</name>
    </ligand>
</feature>
<feature type="binding site" evidence="1">
    <location>
        <position position="145"/>
    </location>
    <ligand>
        <name>substrate</name>
    </ligand>
</feature>
<feature type="binding site" evidence="1">
    <location>
        <position position="157"/>
    </location>
    <ligand>
        <name>substrate</name>
    </ligand>
</feature>
<feature type="binding site" evidence="1">
    <location>
        <begin position="177"/>
        <end position="178"/>
    </location>
    <ligand>
        <name>ATP</name>
        <dbReference type="ChEBI" id="CHEBI:30616"/>
    </ligand>
</feature>
<feature type="binding site" evidence="1">
    <location>
        <begin position="218"/>
        <end position="224"/>
    </location>
    <ligand>
        <name>ATP</name>
        <dbReference type="ChEBI" id="CHEBI:30616"/>
    </ligand>
</feature>
<organism>
    <name type="scientific">Schizosaccharomyces pombe (strain 972 / ATCC 24843)</name>
    <name type="common">Fission yeast</name>
    <dbReference type="NCBI Taxonomy" id="284812"/>
    <lineage>
        <taxon>Eukaryota</taxon>
        <taxon>Fungi</taxon>
        <taxon>Dikarya</taxon>
        <taxon>Ascomycota</taxon>
        <taxon>Taphrinomycotina</taxon>
        <taxon>Schizosaccharomycetes</taxon>
        <taxon>Schizosaccharomycetales</taxon>
        <taxon>Schizosaccharomycetaceae</taxon>
        <taxon>Schizosaccharomyces</taxon>
    </lineage>
</organism>
<gene>
    <name type="ORF">SPAC17H9.13c</name>
</gene>
<proteinExistence type="inferred from homology"/>
<accession>O13810</accession>
<protein>
    <recommendedName>
        <fullName>Probable glutamate 5-kinase</fullName>
        <shortName>GK</shortName>
        <ecNumber>2.7.2.11</ecNumber>
    </recommendedName>
    <alternativeName>
        <fullName>Gamma-glutamyl kinase</fullName>
    </alternativeName>
</protein>
<reference key="1">
    <citation type="journal article" date="2002" name="Nature">
        <title>The genome sequence of Schizosaccharomyces pombe.</title>
        <authorList>
            <person name="Wood V."/>
            <person name="Gwilliam R."/>
            <person name="Rajandream M.A."/>
            <person name="Lyne M.H."/>
            <person name="Lyne R."/>
            <person name="Stewart A."/>
            <person name="Sgouros J.G."/>
            <person name="Peat N."/>
            <person name="Hayles J."/>
            <person name="Baker S.G."/>
            <person name="Basham D."/>
            <person name="Bowman S."/>
            <person name="Brooks K."/>
            <person name="Brown D."/>
            <person name="Brown S."/>
            <person name="Chillingworth T."/>
            <person name="Churcher C.M."/>
            <person name="Collins M."/>
            <person name="Connor R."/>
            <person name="Cronin A."/>
            <person name="Davis P."/>
            <person name="Feltwell T."/>
            <person name="Fraser A."/>
            <person name="Gentles S."/>
            <person name="Goble A."/>
            <person name="Hamlin N."/>
            <person name="Harris D.E."/>
            <person name="Hidalgo J."/>
            <person name="Hodgson G."/>
            <person name="Holroyd S."/>
            <person name="Hornsby T."/>
            <person name="Howarth S."/>
            <person name="Huckle E.J."/>
            <person name="Hunt S."/>
            <person name="Jagels K."/>
            <person name="James K.D."/>
            <person name="Jones L."/>
            <person name="Jones M."/>
            <person name="Leather S."/>
            <person name="McDonald S."/>
            <person name="McLean J."/>
            <person name="Mooney P."/>
            <person name="Moule S."/>
            <person name="Mungall K.L."/>
            <person name="Murphy L.D."/>
            <person name="Niblett D."/>
            <person name="Odell C."/>
            <person name="Oliver K."/>
            <person name="O'Neil S."/>
            <person name="Pearson D."/>
            <person name="Quail M.A."/>
            <person name="Rabbinowitsch E."/>
            <person name="Rutherford K.M."/>
            <person name="Rutter S."/>
            <person name="Saunders D."/>
            <person name="Seeger K."/>
            <person name="Sharp S."/>
            <person name="Skelton J."/>
            <person name="Simmonds M.N."/>
            <person name="Squares R."/>
            <person name="Squares S."/>
            <person name="Stevens K."/>
            <person name="Taylor K."/>
            <person name="Taylor R.G."/>
            <person name="Tivey A."/>
            <person name="Walsh S.V."/>
            <person name="Warren T."/>
            <person name="Whitehead S."/>
            <person name="Woodward J.R."/>
            <person name="Volckaert G."/>
            <person name="Aert R."/>
            <person name="Robben J."/>
            <person name="Grymonprez B."/>
            <person name="Weltjens I."/>
            <person name="Vanstreels E."/>
            <person name="Rieger M."/>
            <person name="Schaefer M."/>
            <person name="Mueller-Auer S."/>
            <person name="Gabel C."/>
            <person name="Fuchs M."/>
            <person name="Duesterhoeft A."/>
            <person name="Fritzc C."/>
            <person name="Holzer E."/>
            <person name="Moestl D."/>
            <person name="Hilbert H."/>
            <person name="Borzym K."/>
            <person name="Langer I."/>
            <person name="Beck A."/>
            <person name="Lehrach H."/>
            <person name="Reinhardt R."/>
            <person name="Pohl T.M."/>
            <person name="Eger P."/>
            <person name="Zimmermann W."/>
            <person name="Wedler H."/>
            <person name="Wambutt R."/>
            <person name="Purnelle B."/>
            <person name="Goffeau A."/>
            <person name="Cadieu E."/>
            <person name="Dreano S."/>
            <person name="Gloux S."/>
            <person name="Lelaure V."/>
            <person name="Mottier S."/>
            <person name="Galibert F."/>
            <person name="Aves S.J."/>
            <person name="Xiang Z."/>
            <person name="Hunt C."/>
            <person name="Moore K."/>
            <person name="Hurst S.M."/>
            <person name="Lucas M."/>
            <person name="Rochet M."/>
            <person name="Gaillardin C."/>
            <person name="Tallada V.A."/>
            <person name="Garzon A."/>
            <person name="Thode G."/>
            <person name="Daga R.R."/>
            <person name="Cruzado L."/>
            <person name="Jimenez J."/>
            <person name="Sanchez M."/>
            <person name="del Rey F."/>
            <person name="Benito J."/>
            <person name="Dominguez A."/>
            <person name="Revuelta J.L."/>
            <person name="Moreno S."/>
            <person name="Armstrong J."/>
            <person name="Forsburg S.L."/>
            <person name="Cerutti L."/>
            <person name="Lowe T."/>
            <person name="McCombie W.R."/>
            <person name="Paulsen I."/>
            <person name="Potashkin J."/>
            <person name="Shpakovski G.V."/>
            <person name="Ussery D."/>
            <person name="Barrell B.G."/>
            <person name="Nurse P."/>
        </authorList>
    </citation>
    <scope>NUCLEOTIDE SEQUENCE [LARGE SCALE GENOMIC DNA]</scope>
    <source>
        <strain>972 / ATCC 24843</strain>
    </source>
</reference>
<evidence type="ECO:0000250" key="1"/>
<evidence type="ECO:0000305" key="2"/>
<name>PROB_SCHPO</name>
<sequence>MSPKSKSTNKTYTIVIKLGTSSICDEKTHEPLISNLSLIVETVVKLRKLGHNVVLVSSGGIAMGLRRLDLPKRPSKLSAVQAIAAVGQGRLISLWDTLFTQLRQPIAQVLITRNDIAERSQYVNAANTISELLHFGVVPIVNENDTLSVQEIRFGDNDTLSAITAGMINADYLFLLTDVDCLYTDNPRTNPDAKPILKIHDTSMVNANVSTPGSGVGTGGMKTKLIAADLGTSSGVNVIICRGSKPSSIFDIIRQESSDNKNESVELPLHTHFVAKKQGRIRDRHFWLLHGLKSHGSLEIDRGAFEAITRTNRAGLLPVGVTKVHGHFSAHQAVTVIYNGEEIGRALVNYSSTEIDLIKGKRSKEIASILGYNETEYVAYRDYLVVHGLNSHHDSQVSSDEH</sequence>
<keyword id="KW-0028">Amino-acid biosynthesis</keyword>
<keyword id="KW-0067">ATP-binding</keyword>
<keyword id="KW-0963">Cytoplasm</keyword>
<keyword id="KW-0418">Kinase</keyword>
<keyword id="KW-0547">Nucleotide-binding</keyword>
<keyword id="KW-0641">Proline biosynthesis</keyword>
<keyword id="KW-1185">Reference proteome</keyword>
<keyword id="KW-0808">Transferase</keyword>